<evidence type="ECO:0000269" key="1">
    <source>
    </source>
</evidence>
<evidence type="ECO:0000305" key="2"/>
<evidence type="ECO:0000305" key="3">
    <source>
    </source>
</evidence>
<evidence type="ECO:0007744" key="4">
    <source>
        <dbReference type="PDB" id="1VH6"/>
    </source>
</evidence>
<evidence type="ECO:0007829" key="5">
    <source>
        <dbReference type="PDB" id="5MAW"/>
    </source>
</evidence>
<feature type="chain" id="PRO_0000180970" description="Flagellar secretion chaperone FliS">
    <location>
        <begin position="1"/>
        <end position="133"/>
    </location>
</feature>
<feature type="helix" evidence="5">
    <location>
        <begin position="12"/>
        <end position="17"/>
    </location>
</feature>
<feature type="helix" evidence="5">
    <location>
        <begin position="20"/>
        <end position="43"/>
    </location>
</feature>
<feature type="helix" evidence="5">
    <location>
        <begin position="47"/>
        <end position="66"/>
    </location>
</feature>
<feature type="helix" evidence="5">
    <location>
        <begin position="75"/>
        <end position="95"/>
    </location>
</feature>
<feature type="helix" evidence="5">
    <location>
        <begin position="98"/>
        <end position="118"/>
    </location>
</feature>
<accession>P39739</accession>
<organism>
    <name type="scientific">Bacillus subtilis (strain 168)</name>
    <dbReference type="NCBI Taxonomy" id="224308"/>
    <lineage>
        <taxon>Bacteria</taxon>
        <taxon>Bacillati</taxon>
        <taxon>Bacillota</taxon>
        <taxon>Bacilli</taxon>
        <taxon>Bacillales</taxon>
        <taxon>Bacillaceae</taxon>
        <taxon>Bacillus</taxon>
    </lineage>
</organism>
<dbReference type="EMBL" id="Z31376">
    <property type="protein sequence ID" value="CAA83249.1"/>
    <property type="molecule type" value="Genomic_DNA"/>
</dbReference>
<dbReference type="EMBL" id="U56901">
    <property type="protein sequence ID" value="AAC44954.1"/>
    <property type="molecule type" value="Genomic_DNA"/>
</dbReference>
<dbReference type="EMBL" id="AL009126">
    <property type="protein sequence ID" value="CAB15550.1"/>
    <property type="molecule type" value="Genomic_DNA"/>
</dbReference>
<dbReference type="PIR" id="I40398">
    <property type="entry name" value="I40398"/>
</dbReference>
<dbReference type="RefSeq" id="NP_391413.1">
    <property type="nucleotide sequence ID" value="NC_000964.3"/>
</dbReference>
<dbReference type="RefSeq" id="WP_003243747.1">
    <property type="nucleotide sequence ID" value="NZ_OZ025638.1"/>
</dbReference>
<dbReference type="PDB" id="1VH6">
    <property type="method" value="X-ray"/>
    <property type="resolution" value="2.50 A"/>
    <property type="chains" value="A/B=2-133"/>
</dbReference>
<dbReference type="PDB" id="5MAW">
    <property type="method" value="X-ray"/>
    <property type="resolution" value="1.50 A"/>
    <property type="chains" value="E=1-133"/>
</dbReference>
<dbReference type="PDB" id="6GOW">
    <property type="method" value="X-ray"/>
    <property type="resolution" value="2.10 A"/>
    <property type="chains" value="E=1-133"/>
</dbReference>
<dbReference type="PDBsum" id="1VH6"/>
<dbReference type="PDBsum" id="5MAW"/>
<dbReference type="PDBsum" id="6GOW"/>
<dbReference type="SMR" id="P39739"/>
<dbReference type="DIP" id="DIP-59541N"/>
<dbReference type="FunCoup" id="P39739">
    <property type="interactions" value="112"/>
</dbReference>
<dbReference type="IntAct" id="P39739">
    <property type="interactions" value="1"/>
</dbReference>
<dbReference type="STRING" id="224308.BSU35330"/>
<dbReference type="PaxDb" id="224308-BSU35330"/>
<dbReference type="EnsemblBacteria" id="CAB15550">
    <property type="protein sequence ID" value="CAB15550"/>
    <property type="gene ID" value="BSU_35330"/>
</dbReference>
<dbReference type="GeneID" id="936720"/>
<dbReference type="KEGG" id="bsu:BSU35330"/>
<dbReference type="PATRIC" id="fig|224308.179.peg.3824"/>
<dbReference type="eggNOG" id="COG1516">
    <property type="taxonomic scope" value="Bacteria"/>
</dbReference>
<dbReference type="InParanoid" id="P39739"/>
<dbReference type="OrthoDB" id="1524959at2"/>
<dbReference type="PhylomeDB" id="P39739"/>
<dbReference type="BioCyc" id="BSUB:BSU35330-MONOMER"/>
<dbReference type="EvolutionaryTrace" id="P39739"/>
<dbReference type="Proteomes" id="UP000001570">
    <property type="component" value="Chromosome"/>
</dbReference>
<dbReference type="GO" id="GO:0005829">
    <property type="term" value="C:cytosol"/>
    <property type="evidence" value="ECO:0007669"/>
    <property type="project" value="UniProtKB-SubCell"/>
</dbReference>
<dbReference type="GO" id="GO:0044780">
    <property type="term" value="P:bacterial-type flagellum assembly"/>
    <property type="evidence" value="ECO:0007669"/>
    <property type="project" value="InterPro"/>
</dbReference>
<dbReference type="GO" id="GO:0071973">
    <property type="term" value="P:bacterial-type flagellum-dependent cell motility"/>
    <property type="evidence" value="ECO:0000318"/>
    <property type="project" value="GO_Central"/>
</dbReference>
<dbReference type="CDD" id="cd16098">
    <property type="entry name" value="FliS"/>
    <property type="match status" value="1"/>
</dbReference>
<dbReference type="Gene3D" id="1.20.120.340">
    <property type="entry name" value="Flagellar protein FliS"/>
    <property type="match status" value="1"/>
</dbReference>
<dbReference type="InterPro" id="IPR003713">
    <property type="entry name" value="FliS"/>
</dbReference>
<dbReference type="InterPro" id="IPR036584">
    <property type="entry name" value="FliS_sf"/>
</dbReference>
<dbReference type="NCBIfam" id="TIGR00208">
    <property type="entry name" value="fliS"/>
    <property type="match status" value="1"/>
</dbReference>
<dbReference type="PANTHER" id="PTHR34773">
    <property type="entry name" value="FLAGELLAR SECRETION CHAPERONE FLIS"/>
    <property type="match status" value="1"/>
</dbReference>
<dbReference type="PANTHER" id="PTHR34773:SF1">
    <property type="entry name" value="FLAGELLAR SECRETION CHAPERONE FLIS"/>
    <property type="match status" value="1"/>
</dbReference>
<dbReference type="Pfam" id="PF02561">
    <property type="entry name" value="FliS"/>
    <property type="match status" value="1"/>
</dbReference>
<dbReference type="PIRSF" id="PIRSF039090">
    <property type="entry name" value="Flis"/>
    <property type="match status" value="1"/>
</dbReference>
<dbReference type="SUPFAM" id="SSF101116">
    <property type="entry name" value="Flagellar export chaperone FliS"/>
    <property type="match status" value="1"/>
</dbReference>
<sequence length="133" mass="15131">MAIQNPYTAYQQNSVNTATPGELTLMLYNGCLKFIRLAAQAIENDDMERKNENLIKAQNIIQELNFTLNRNIELSASMGAMYDYMYRRLVQANIKNDTGMLAEVEGYVTDFRDAWKQAIQSERKDRHGSGGIA</sequence>
<keyword id="KW-0002">3D-structure</keyword>
<keyword id="KW-1005">Bacterial flagellum biogenesis</keyword>
<keyword id="KW-0143">Chaperone</keyword>
<keyword id="KW-0963">Cytoplasm</keyword>
<keyword id="KW-1185">Reference proteome</keyword>
<gene>
    <name type="primary">fliS</name>
    <name type="ordered locus">BSU35330</name>
</gene>
<name>FLIS_BACSU</name>
<comment type="function">
    <text evidence="1">Essential for filament assembly (PubMed:23144244). May act as a facilitator of flagellin (hag) secretion. Antagonizes translational repressor CsrA indirectly (PubMed:23144244).</text>
</comment>
<comment type="subunit">
    <text evidence="1 3">Homodimer (PubMed:16021622, PubMed:23144244). Interacts directly with flagellin (hag), forms a 3-way complex of Hag, FliS and FliW in which Flis and FliW do not directly interact (PubMed:23144244).</text>
</comment>
<comment type="subcellular location">
    <subcellularLocation>
        <location evidence="2">Cytoplasm</location>
        <location evidence="2">Cytosol</location>
    </subcellularLocation>
</comment>
<comment type="disruption phenotype">
    <text evidence="1">Severe defect in motility on agar plates, forms multiple short filament stubs on the cell surface, decreased expression of flagellin (hag), 30-fold decrease in Hag secretion. All phenotypes are partially suppressed by deletion of csrA, which increases translation of Hag (PubMed:23144244).</text>
</comment>
<comment type="similarity">
    <text evidence="2">Belongs to the FliS family.</text>
</comment>
<protein>
    <recommendedName>
        <fullName>Flagellar secretion chaperone FliS</fullName>
    </recommendedName>
</protein>
<proteinExistence type="evidence at protein level"/>
<reference key="1">
    <citation type="journal article" date="1994" name="J. Bacteriol.">
        <title>The Bacillus subtilis sigma D-dependent operon encoding the flagellar proteins FliD, FliS, and FliT.</title>
        <authorList>
            <person name="Chen L."/>
            <person name="Helmann J.D."/>
        </authorList>
    </citation>
    <scope>NUCLEOTIDE SEQUENCE [GENOMIC DNA]</scope>
    <source>
        <strain>168 / HB2058</strain>
    </source>
</reference>
<reference key="2">
    <citation type="journal article" date="1996" name="Microbiology">
        <title>Sequence of the 305 degrees-307 degrees region of the Bacillus subtilis chromosome.</title>
        <authorList>
            <person name="Soldo B."/>
            <person name="Lazarevic V."/>
            <person name="Mauel C."/>
            <person name="Karamata D."/>
        </authorList>
    </citation>
    <scope>NUCLEOTIDE SEQUENCE [GENOMIC DNA]</scope>
    <source>
        <strain>168</strain>
    </source>
</reference>
<reference key="3">
    <citation type="journal article" date="1997" name="Nature">
        <title>The complete genome sequence of the Gram-positive bacterium Bacillus subtilis.</title>
        <authorList>
            <person name="Kunst F."/>
            <person name="Ogasawara N."/>
            <person name="Moszer I."/>
            <person name="Albertini A.M."/>
            <person name="Alloni G."/>
            <person name="Azevedo V."/>
            <person name="Bertero M.G."/>
            <person name="Bessieres P."/>
            <person name="Bolotin A."/>
            <person name="Borchert S."/>
            <person name="Borriss R."/>
            <person name="Boursier L."/>
            <person name="Brans A."/>
            <person name="Braun M."/>
            <person name="Brignell S.C."/>
            <person name="Bron S."/>
            <person name="Brouillet S."/>
            <person name="Bruschi C.V."/>
            <person name="Caldwell B."/>
            <person name="Capuano V."/>
            <person name="Carter N.M."/>
            <person name="Choi S.-K."/>
            <person name="Codani J.-J."/>
            <person name="Connerton I.F."/>
            <person name="Cummings N.J."/>
            <person name="Daniel R.A."/>
            <person name="Denizot F."/>
            <person name="Devine K.M."/>
            <person name="Duesterhoeft A."/>
            <person name="Ehrlich S.D."/>
            <person name="Emmerson P.T."/>
            <person name="Entian K.-D."/>
            <person name="Errington J."/>
            <person name="Fabret C."/>
            <person name="Ferrari E."/>
            <person name="Foulger D."/>
            <person name="Fritz C."/>
            <person name="Fujita M."/>
            <person name="Fujita Y."/>
            <person name="Fuma S."/>
            <person name="Galizzi A."/>
            <person name="Galleron N."/>
            <person name="Ghim S.-Y."/>
            <person name="Glaser P."/>
            <person name="Goffeau A."/>
            <person name="Golightly E.J."/>
            <person name="Grandi G."/>
            <person name="Guiseppi G."/>
            <person name="Guy B.J."/>
            <person name="Haga K."/>
            <person name="Haiech J."/>
            <person name="Harwood C.R."/>
            <person name="Henaut A."/>
            <person name="Hilbert H."/>
            <person name="Holsappel S."/>
            <person name="Hosono S."/>
            <person name="Hullo M.-F."/>
            <person name="Itaya M."/>
            <person name="Jones L.-M."/>
            <person name="Joris B."/>
            <person name="Karamata D."/>
            <person name="Kasahara Y."/>
            <person name="Klaerr-Blanchard M."/>
            <person name="Klein C."/>
            <person name="Kobayashi Y."/>
            <person name="Koetter P."/>
            <person name="Koningstein G."/>
            <person name="Krogh S."/>
            <person name="Kumano M."/>
            <person name="Kurita K."/>
            <person name="Lapidus A."/>
            <person name="Lardinois S."/>
            <person name="Lauber J."/>
            <person name="Lazarevic V."/>
            <person name="Lee S.-M."/>
            <person name="Levine A."/>
            <person name="Liu H."/>
            <person name="Masuda S."/>
            <person name="Mauel C."/>
            <person name="Medigue C."/>
            <person name="Medina N."/>
            <person name="Mellado R.P."/>
            <person name="Mizuno M."/>
            <person name="Moestl D."/>
            <person name="Nakai S."/>
            <person name="Noback M."/>
            <person name="Noone D."/>
            <person name="O'Reilly M."/>
            <person name="Ogawa K."/>
            <person name="Ogiwara A."/>
            <person name="Oudega B."/>
            <person name="Park S.-H."/>
            <person name="Parro V."/>
            <person name="Pohl T.M."/>
            <person name="Portetelle D."/>
            <person name="Porwollik S."/>
            <person name="Prescott A.M."/>
            <person name="Presecan E."/>
            <person name="Pujic P."/>
            <person name="Purnelle B."/>
            <person name="Rapoport G."/>
            <person name="Rey M."/>
            <person name="Reynolds S."/>
            <person name="Rieger M."/>
            <person name="Rivolta C."/>
            <person name="Rocha E."/>
            <person name="Roche B."/>
            <person name="Rose M."/>
            <person name="Sadaie Y."/>
            <person name="Sato T."/>
            <person name="Scanlan E."/>
            <person name="Schleich S."/>
            <person name="Schroeter R."/>
            <person name="Scoffone F."/>
            <person name="Sekiguchi J."/>
            <person name="Sekowska A."/>
            <person name="Seror S.J."/>
            <person name="Serror P."/>
            <person name="Shin B.-S."/>
            <person name="Soldo B."/>
            <person name="Sorokin A."/>
            <person name="Tacconi E."/>
            <person name="Takagi T."/>
            <person name="Takahashi H."/>
            <person name="Takemaru K."/>
            <person name="Takeuchi M."/>
            <person name="Tamakoshi A."/>
            <person name="Tanaka T."/>
            <person name="Terpstra P."/>
            <person name="Tognoni A."/>
            <person name="Tosato V."/>
            <person name="Uchiyama S."/>
            <person name="Vandenbol M."/>
            <person name="Vannier F."/>
            <person name="Vassarotti A."/>
            <person name="Viari A."/>
            <person name="Wambutt R."/>
            <person name="Wedler E."/>
            <person name="Wedler H."/>
            <person name="Weitzenegger T."/>
            <person name="Winters P."/>
            <person name="Wipat A."/>
            <person name="Yamamoto H."/>
            <person name="Yamane K."/>
            <person name="Yasumoto K."/>
            <person name="Yata K."/>
            <person name="Yoshida K."/>
            <person name="Yoshikawa H.-F."/>
            <person name="Zumstein E."/>
            <person name="Yoshikawa H."/>
            <person name="Danchin A."/>
        </authorList>
    </citation>
    <scope>NUCLEOTIDE SEQUENCE [LARGE SCALE GENOMIC DNA]</scope>
    <source>
        <strain>168</strain>
    </source>
</reference>
<reference key="4">
    <citation type="journal article" date="2013" name="J. Bacteriol.">
        <title>FliW and FliS function independently to control cytoplasmic flagellin levels in Bacillus subtilis.</title>
        <authorList>
            <person name="Mukherjee S."/>
            <person name="Babitzke P."/>
            <person name="Kearns D.B."/>
        </authorList>
    </citation>
    <scope>FUNCTION</scope>
    <scope>SUBUNIT</scope>
    <scope>INTERACTION WITH FLAGELLIN</scope>
    <scope>DISRUPTION PHENOTYPE</scope>
    <source>
        <strain>3610</strain>
    </source>
</reference>
<reference evidence="4" key="5">
    <citation type="journal article" date="2005" name="Proteins">
        <title>Structural analysis of a set of proteins resulting from a bacterial genomics project.</title>
        <authorList>
            <person name="Badger J."/>
            <person name="Sauder J.M."/>
            <person name="Adams J.M."/>
            <person name="Antonysamy S."/>
            <person name="Bain K."/>
            <person name="Bergseid M.G."/>
            <person name="Buchanan S.G."/>
            <person name="Buchanan M.D."/>
            <person name="Batiyenko Y."/>
            <person name="Christopher J.A."/>
            <person name="Emtage S."/>
            <person name="Eroshkina A."/>
            <person name="Feil I."/>
            <person name="Furlong E.B."/>
            <person name="Gajiwala K.S."/>
            <person name="Gao X."/>
            <person name="He D."/>
            <person name="Hendle J."/>
            <person name="Huber A."/>
            <person name="Hoda K."/>
            <person name="Kearins P."/>
            <person name="Kissinger C."/>
            <person name="Laubert B."/>
            <person name="Lewis H.A."/>
            <person name="Lin J."/>
            <person name="Loomis K."/>
            <person name="Lorimer D."/>
            <person name="Louie G."/>
            <person name="Maletic M."/>
            <person name="Marsh C.D."/>
            <person name="Miller I."/>
            <person name="Molinari J."/>
            <person name="Muller-Dieckmann H.J."/>
            <person name="Newman J.M."/>
            <person name="Noland B.W."/>
            <person name="Pagarigan B."/>
            <person name="Park F."/>
            <person name="Peat T.S."/>
            <person name="Post K.W."/>
            <person name="Radojicic S."/>
            <person name="Ramos A."/>
            <person name="Romero R."/>
            <person name="Rutter M.E."/>
            <person name="Sanderson W.E."/>
            <person name="Schwinn K.D."/>
            <person name="Tresser J."/>
            <person name="Winhoven J."/>
            <person name="Wright T.A."/>
            <person name="Wu L."/>
            <person name="Xu J."/>
            <person name="Harris T.J.R."/>
        </authorList>
    </citation>
    <scope>X-RAY CRYSTALLOGRAPHY (2.50 ANGSTROMS) OF 2-133</scope>
    <scope>SUBUNIT</scope>
</reference>